<accession>G3XCZ8</accession>
<evidence type="ECO:0000269" key="1">
    <source>
    </source>
</evidence>
<evidence type="ECO:0000269" key="2">
    <source>
    </source>
</evidence>
<evidence type="ECO:0000269" key="3">
    <source>
    </source>
</evidence>
<evidence type="ECO:0000269" key="4">
    <source>
    </source>
</evidence>
<evidence type="ECO:0000269" key="5">
    <source>
    </source>
</evidence>
<evidence type="ECO:0000303" key="6">
    <source>
    </source>
</evidence>
<evidence type="ECO:0000305" key="7"/>
<evidence type="ECO:0000312" key="8">
    <source>
        <dbReference type="EMBL" id="AAG04061.1"/>
    </source>
</evidence>
<evidence type="ECO:0007744" key="9">
    <source>
        <dbReference type="PDB" id="1SK7"/>
    </source>
</evidence>
<proteinExistence type="evidence at protein level"/>
<organism>
    <name type="scientific">Pseudomonas aeruginosa (strain ATCC 15692 / DSM 22644 / CIP 104116 / JCM 14847 / LMG 12228 / 1C / PRS 101 / PAO1)</name>
    <dbReference type="NCBI Taxonomy" id="208964"/>
    <lineage>
        <taxon>Bacteria</taxon>
        <taxon>Pseudomonadati</taxon>
        <taxon>Pseudomonadota</taxon>
        <taxon>Gammaproteobacteria</taxon>
        <taxon>Pseudomonadales</taxon>
        <taxon>Pseudomonadaceae</taxon>
        <taxon>Pseudomonas</taxon>
    </lineage>
</organism>
<name>PIGA_PSEAE</name>
<feature type="chain" id="PRO_0000446447" description="Heme oxygenase PigA">
    <location>
        <begin position="1"/>
        <end position="198"/>
    </location>
</feature>
<feature type="binding site" description="axial binding residue" evidence="4">
    <location>
        <position position="26"/>
    </location>
    <ligand>
        <name>heme b</name>
        <dbReference type="ChEBI" id="CHEBI:60344"/>
    </ligand>
    <ligandPart>
        <name>Fe</name>
        <dbReference type="ChEBI" id="CHEBI:18248"/>
    </ligandPart>
</feature>
<feature type="mutagenesis site" description="No change in regioselectivity of the reaction. Changes regioselectivity and forms biliverdin alpha (55%), biliverdin delta (35%) and biliverdin beta (10%); when associated with Y-117." evidence="3">
    <original>N</original>
    <variation>K</variation>
    <location>
        <position position="19"/>
    </location>
</feature>
<feature type="mutagenesis site" description="No change in regioselectivity of the reaction. Changes regioselectivity and forms biliverdin alpha (55%), biliverdin delta (35%) and biliverdin beta (10%); when associated with K-19." evidence="3">
    <original>F</original>
    <variation>Y</variation>
    <location>
        <position position="117"/>
    </location>
</feature>
<protein>
    <recommendedName>
        <fullName evidence="7">Heme oxygenase PigA</fullName>
        <ecNumber evidence="1 3">1.14.99.58</ecNumber>
    </recommendedName>
</protein>
<comment type="function">
    <text evidence="1 3 5">Involved in heme degradation (PubMed:11591684, PubMed:12475329, PubMed:17915950). Catalyzes the degradation of heme to biliverdin, with the release of iron. Forms biliverdin delta (70%) and beta (30%) (PubMed:12475329). Under anaerobic conditions ferredoxin--NADP(+) reductase (fpr) can provide the necessary electrons; Bfd is not required (PubMed:17915950).</text>
</comment>
<comment type="catalytic activity">
    <reaction evidence="1 3">
        <text>heme b + 3 AH2 + 3 O2 + 2 H(+) = biliverdin IXbeta + CO + Fe(2+) + 3 A + 3 H2O</text>
        <dbReference type="Rhea" id="RHEA:52228"/>
        <dbReference type="ChEBI" id="CHEBI:13193"/>
        <dbReference type="ChEBI" id="CHEBI:15377"/>
        <dbReference type="ChEBI" id="CHEBI:15378"/>
        <dbReference type="ChEBI" id="CHEBI:15379"/>
        <dbReference type="ChEBI" id="CHEBI:17245"/>
        <dbReference type="ChEBI" id="CHEBI:17499"/>
        <dbReference type="ChEBI" id="CHEBI:29033"/>
        <dbReference type="ChEBI" id="CHEBI:60344"/>
        <dbReference type="ChEBI" id="CHEBI:136509"/>
        <dbReference type="EC" id="1.14.99.58"/>
    </reaction>
</comment>
<comment type="catalytic activity">
    <reaction evidence="1 3">
        <text>heme b + 3 AH2 + 3 O2 + 3 H(+) = biliverdin IXdelta + CO + Fe(2+) + 3 A + 3 H2O</text>
        <dbReference type="Rhea" id="RHEA:52224"/>
        <dbReference type="ChEBI" id="CHEBI:13193"/>
        <dbReference type="ChEBI" id="CHEBI:15377"/>
        <dbReference type="ChEBI" id="CHEBI:15378"/>
        <dbReference type="ChEBI" id="CHEBI:15379"/>
        <dbReference type="ChEBI" id="CHEBI:17245"/>
        <dbReference type="ChEBI" id="CHEBI:17499"/>
        <dbReference type="ChEBI" id="CHEBI:29033"/>
        <dbReference type="ChEBI" id="CHEBI:60344"/>
        <dbReference type="ChEBI" id="CHEBI:136510"/>
        <dbReference type="EC" id="1.14.99.58"/>
    </reaction>
</comment>
<comment type="induction">
    <text evidence="2">Increased transcription under iron starvation (PubMed:12207696).</text>
</comment>
<comment type="disruption phenotype">
    <text evidence="1">Mutants are unable to use heme as a source of iron.</text>
</comment>
<comment type="similarity">
    <text evidence="7">Belongs to the heme oxygenase family.</text>
</comment>
<sequence length="198" mass="21954">MDTLAPESTRQNLRSQRLNLLTNEPHQRLESLVKSKEPFASRDNFARFVAAQYLFQHDLEPLYRNEALARLFPGLASRARDDAARADLADLGHPVPEGDQSVREADLSLAEALGWLFVSEGSKLGAAFLFKKAAALELDENFGARHLAEPEGGRAQGWKSFVAILDGIELNEEEERLAAKGASDAFNRFGDLLERTFA</sequence>
<reference key="1">
    <citation type="journal article" date="2000" name="Nature">
        <title>Complete genome sequence of Pseudomonas aeruginosa PAO1, an opportunistic pathogen.</title>
        <authorList>
            <person name="Stover C.K."/>
            <person name="Pham X.-Q.T."/>
            <person name="Erwin A.L."/>
            <person name="Mizoguchi S.D."/>
            <person name="Warrener P."/>
            <person name="Hickey M.J."/>
            <person name="Brinkman F.S.L."/>
            <person name="Hufnagle W.O."/>
            <person name="Kowalik D.J."/>
            <person name="Lagrou M."/>
            <person name="Garber R.L."/>
            <person name="Goltry L."/>
            <person name="Tolentino E."/>
            <person name="Westbrock-Wadman S."/>
            <person name="Yuan Y."/>
            <person name="Brody L.L."/>
            <person name="Coulter S.N."/>
            <person name="Folger K.R."/>
            <person name="Kas A."/>
            <person name="Larbig K."/>
            <person name="Lim R.M."/>
            <person name="Smith K.A."/>
            <person name="Spencer D.H."/>
            <person name="Wong G.K.-S."/>
            <person name="Wu Z."/>
            <person name="Paulsen I.T."/>
            <person name="Reizer J."/>
            <person name="Saier M.H. Jr."/>
            <person name="Hancock R.E.W."/>
            <person name="Lory S."/>
            <person name="Olson M.V."/>
        </authorList>
    </citation>
    <scope>NUCLEOTIDE SEQUENCE [LARGE SCALE GENOMIC DNA]</scope>
    <source>
        <strain>ATCC 15692 / DSM 22644 / CIP 104116 / JCM 14847 / LMG 12228 / 1C / PRS 101 / PAO1</strain>
    </source>
</reference>
<reference key="2">
    <citation type="journal article" date="2001" name="J. Bacteriol.">
        <title>Homologues of neisserial heme oxygenase in Gram-negative bacteria: degradation of heme by the product of the pigA gene of Pseudomonas aeruginosa.</title>
        <authorList>
            <person name="Ratliff M."/>
            <person name="Zhu W."/>
            <person name="Deshmukh R."/>
            <person name="Wilks A."/>
            <person name="Stojiljkovic I."/>
        </authorList>
    </citation>
    <scope>FUNCTION</scope>
    <scope>CATALYTIC ACTIVITY</scope>
    <scope>DISRUPTION PHENOTYPE</scope>
    <source>
        <strain>IA614 / PAO1</strain>
    </source>
</reference>
<reference key="3">
    <citation type="journal article" date="2002" name="Mol. Microbiol.">
        <title>GeneChip expression analysis of the iron starvation response in Pseudomonas aeruginosa: identification of novel pyoverdine biosynthesis genes.</title>
        <authorList>
            <person name="Ochsner U.A."/>
            <person name="Wilderman P.J."/>
            <person name="Vasil A.I."/>
            <person name="Vasil M.L."/>
        </authorList>
    </citation>
    <scope>INDUCTION BY IRON STARVATION</scope>
    <source>
        <strain>ATCC 15692 / DSM 22644 / CIP 104116 / JCM 14847 / LMG 12228 / 1C / PRS 101 / PAO1</strain>
    </source>
</reference>
<reference key="4">
    <citation type="journal article" date="2002" name="J. Am. Chem. Soc.">
        <title>Oxidation of heme to beta- and delta-biliverdin by Pseudomonas aeruginosa heme oxygenase as a consequence of an unusual seating of the heme.</title>
        <authorList>
            <person name="Caignan G.A."/>
            <person name="Deshmukh R."/>
            <person name="Wilks A."/>
            <person name="Zeng Y."/>
            <person name="Huang H.W."/>
            <person name="Moenne-Loccoz P."/>
            <person name="Bunce R.A."/>
            <person name="Eastman M.A."/>
            <person name="Rivera M."/>
        </authorList>
    </citation>
    <scope>FUNCTION</scope>
    <scope>CATALYTIC ACTIVITY</scope>
    <scope>MUTAGENESIS OF ASN-19 AND PHE-117</scope>
</reference>
<reference key="5">
    <citation type="journal article" date="2007" name="Biochemistry">
        <title>Biochemical and structural characterization of Pseudomonas aeruginosa Bfd and FPR: ferredoxin NADP+ reductase and not ferredoxin is the redox partner of heme oxygenase under iron-starvation conditions.</title>
        <authorList>
            <person name="Wang A."/>
            <person name="Zeng Y."/>
            <person name="Han H."/>
            <person name="Weeratunga S."/>
            <person name="Morgan B.N."/>
            <person name="Moenne-Loccoz P."/>
            <person name="Schonbrunn E."/>
            <person name="Rivera M."/>
        </authorList>
    </citation>
    <scope>FUNCTION</scope>
    <scope>CATALYTIC ACTIVITY</scope>
    <source>
        <strain>ATCC 15692 / DSM 22644 / CIP 104116 / JCM 14847 / LMG 12228 / 1C / PRS 101 / PAO1</strain>
    </source>
</reference>
<reference evidence="9" key="6">
    <citation type="journal article" date="2004" name="Biochemistry">
        <title>Structural basis for novel delta-regioselective heme oxygenation in the opportunistic pathogen Pseudomonas aeruginosa.</title>
        <authorList>
            <person name="Friedman J."/>
            <person name="Lad L."/>
            <person name="Li H."/>
            <person name="Wilks A."/>
            <person name="Poulos T.L."/>
        </authorList>
    </citation>
    <scope>X-RAY CRYSTALLOGRAPHY (1.60 ANGSTROMS) IN COMPLEX WITH HEME</scope>
</reference>
<gene>
    <name evidence="6" type="primary">pigA</name>
    <name evidence="8" type="ordered locus">PA0672</name>
</gene>
<keyword id="KW-0002">3D-structure</keyword>
<keyword id="KW-0349">Heme</keyword>
<keyword id="KW-0408">Iron</keyword>
<keyword id="KW-0479">Metal-binding</keyword>
<keyword id="KW-0560">Oxidoreductase</keyword>
<keyword id="KW-1185">Reference proteome</keyword>
<dbReference type="EC" id="1.14.99.58" evidence="1 3"/>
<dbReference type="EMBL" id="AE004091">
    <property type="protein sequence ID" value="AAG04061.1"/>
    <property type="molecule type" value="Genomic_DNA"/>
</dbReference>
<dbReference type="PIR" id="A83562">
    <property type="entry name" value="A83562"/>
</dbReference>
<dbReference type="RefSeq" id="WP_003085321.1">
    <property type="nucleotide sequence ID" value="NZ_QZGE01000025.1"/>
</dbReference>
<dbReference type="PDB" id="1SK7">
    <property type="method" value="X-ray"/>
    <property type="resolution" value="1.60 A"/>
    <property type="chains" value="A=1-198"/>
</dbReference>
<dbReference type="PDBsum" id="1SK7"/>
<dbReference type="SMR" id="G3XCZ8"/>
<dbReference type="STRING" id="208964.PA0672"/>
<dbReference type="PaxDb" id="208964-PA0672"/>
<dbReference type="KEGG" id="pae:PA0672"/>
<dbReference type="PATRIC" id="fig|208964.12.peg.703"/>
<dbReference type="PseudoCAP" id="PA0672"/>
<dbReference type="HOGENOM" id="CLU_085041_1_0_6"/>
<dbReference type="InParanoid" id="G3XCZ8"/>
<dbReference type="OrthoDB" id="9149607at2"/>
<dbReference type="PhylomeDB" id="G3XCZ8"/>
<dbReference type="Proteomes" id="UP000002438">
    <property type="component" value="Chromosome"/>
</dbReference>
<dbReference type="GO" id="GO:0004392">
    <property type="term" value="F:heme oxygenase (decyclizing) activity"/>
    <property type="evidence" value="ECO:0007669"/>
    <property type="project" value="InterPro"/>
</dbReference>
<dbReference type="GO" id="GO:0046872">
    <property type="term" value="F:metal ion binding"/>
    <property type="evidence" value="ECO:0007669"/>
    <property type="project" value="UniProtKB-KW"/>
</dbReference>
<dbReference type="GO" id="GO:0071281">
    <property type="term" value="P:cellular response to iron ion"/>
    <property type="evidence" value="ECO:0000269"/>
    <property type="project" value="CollecTF"/>
</dbReference>
<dbReference type="GO" id="GO:0006788">
    <property type="term" value="P:heme oxidation"/>
    <property type="evidence" value="ECO:0000315"/>
    <property type="project" value="PseudoCAP"/>
</dbReference>
<dbReference type="CDD" id="cd00232">
    <property type="entry name" value="HemeO-like"/>
    <property type="match status" value="1"/>
</dbReference>
<dbReference type="FunFam" id="1.20.910.10:FF:000012">
    <property type="entry name" value="Heme oxygenase"/>
    <property type="match status" value="1"/>
</dbReference>
<dbReference type="Gene3D" id="1.20.910.10">
    <property type="entry name" value="Heme oxygenase-like"/>
    <property type="match status" value="1"/>
</dbReference>
<dbReference type="InterPro" id="IPR016053">
    <property type="entry name" value="Haem_Oase-like"/>
</dbReference>
<dbReference type="InterPro" id="IPR016084">
    <property type="entry name" value="Haem_Oase-like_multi-hlx"/>
</dbReference>
<dbReference type="Pfam" id="PF01126">
    <property type="entry name" value="Heme_oxygenase"/>
    <property type="match status" value="1"/>
</dbReference>
<dbReference type="SUPFAM" id="SSF48613">
    <property type="entry name" value="Heme oxygenase-like"/>
    <property type="match status" value="1"/>
</dbReference>